<proteinExistence type="inferred from homology"/>
<reference key="1">
    <citation type="journal article" date="2006" name="J. Bacteriol.">
        <title>Complete genome sequence of Yersinia pestis strains Antiqua and Nepal516: evidence of gene reduction in an emerging pathogen.</title>
        <authorList>
            <person name="Chain P.S.G."/>
            <person name="Hu P."/>
            <person name="Malfatti S.A."/>
            <person name="Radnedge L."/>
            <person name="Larimer F."/>
            <person name="Vergez L.M."/>
            <person name="Worsham P."/>
            <person name="Chu M.C."/>
            <person name="Andersen G.L."/>
        </authorList>
    </citation>
    <scope>NUCLEOTIDE SEQUENCE [LARGE SCALE GENOMIC DNA]</scope>
    <source>
        <strain>Nepal516</strain>
    </source>
</reference>
<reference key="2">
    <citation type="submission" date="2009-04" db="EMBL/GenBank/DDBJ databases">
        <title>Yersinia pestis Nepal516A whole genome shotgun sequencing project.</title>
        <authorList>
            <person name="Plunkett G. III"/>
            <person name="Anderson B.D."/>
            <person name="Baumler D.J."/>
            <person name="Burland V."/>
            <person name="Cabot E.L."/>
            <person name="Glasner J.D."/>
            <person name="Mau B."/>
            <person name="Neeno-Eckwall E."/>
            <person name="Perna N.T."/>
            <person name="Munk A.C."/>
            <person name="Tapia R."/>
            <person name="Green L.D."/>
            <person name="Rogers Y.C."/>
            <person name="Detter J.C."/>
            <person name="Bruce D.C."/>
            <person name="Brettin T.S."/>
        </authorList>
    </citation>
    <scope>NUCLEOTIDE SEQUENCE [LARGE SCALE GENOMIC DNA]</scope>
    <source>
        <strain>Nepal516</strain>
    </source>
</reference>
<evidence type="ECO:0000255" key="1">
    <source>
        <dbReference type="HAMAP-Rule" id="MF_01589"/>
    </source>
</evidence>
<evidence type="ECO:0000256" key="2">
    <source>
        <dbReference type="SAM" id="MobiDB-lite"/>
    </source>
</evidence>
<feature type="chain" id="PRO_0000314408" description="Carboxy-S-adenosyl-L-methionine synthase">
    <location>
        <begin position="1"/>
        <end position="267"/>
    </location>
</feature>
<feature type="region of interest" description="Disordered" evidence="2">
    <location>
        <begin position="1"/>
        <end position="25"/>
    </location>
</feature>
<feature type="compositionally biased region" description="Polar residues" evidence="2">
    <location>
        <begin position="1"/>
        <end position="11"/>
    </location>
</feature>
<feature type="compositionally biased region" description="Basic and acidic residues" evidence="2">
    <location>
        <begin position="12"/>
        <end position="24"/>
    </location>
</feature>
<feature type="binding site" evidence="1">
    <location>
        <position position="59"/>
    </location>
    <ligand>
        <name>S-adenosyl-L-methionine</name>
        <dbReference type="ChEBI" id="CHEBI:59789"/>
    </ligand>
</feature>
<feature type="binding site" evidence="1">
    <location>
        <begin position="84"/>
        <end position="86"/>
    </location>
    <ligand>
        <name>S-adenosyl-L-methionine</name>
        <dbReference type="ChEBI" id="CHEBI:59789"/>
    </ligand>
</feature>
<feature type="binding site" evidence="1">
    <location>
        <begin position="109"/>
        <end position="110"/>
    </location>
    <ligand>
        <name>S-adenosyl-L-methionine</name>
        <dbReference type="ChEBI" id="CHEBI:59789"/>
    </ligand>
</feature>
<feature type="binding site" evidence="1">
    <location>
        <begin position="137"/>
        <end position="138"/>
    </location>
    <ligand>
        <name>S-adenosyl-L-methionine</name>
        <dbReference type="ChEBI" id="CHEBI:59789"/>
    </ligand>
</feature>
<feature type="binding site" evidence="1">
    <location>
        <position position="152"/>
    </location>
    <ligand>
        <name>S-adenosyl-L-methionine</name>
        <dbReference type="ChEBI" id="CHEBI:59789"/>
    </ligand>
</feature>
<feature type="binding site" evidence="1">
    <location>
        <position position="219"/>
    </location>
    <ligand>
        <name>S-adenosyl-L-methionine</name>
        <dbReference type="ChEBI" id="CHEBI:59789"/>
    </ligand>
</feature>
<accession>Q1CJH3</accession>
<accession>C4GSF3</accession>
<sequence>MPNRDTQSQNDTPRHSPEAAEPQRDSLFAAPIAKLGDWTFDEKVAEVFPDMIQRSVPGYSNIISMIGMLAERFVQPNSQIYDLGCSLGAATLSMRRNIKAEGCKIIAVDNSPAMVERCRRHIDAFRAETPVDVVEADILDIKLENASMVVLNFTLQFLEPANRQRLLNQVYQGLRPGGALVLSEKFSFADHNVGELLFNMHHDFKRANGYSELEISQKRSMLENVMLTDSVETHKNRLHQAGFEHAEVWFQCFNFGSLIALKAGEAQ</sequence>
<gene>
    <name evidence="1" type="primary">cmoA</name>
    <name type="ordered locus">YPN_1527</name>
    <name type="ORF">YP516_1695</name>
</gene>
<organism>
    <name type="scientific">Yersinia pestis bv. Antiqua (strain Nepal516)</name>
    <dbReference type="NCBI Taxonomy" id="377628"/>
    <lineage>
        <taxon>Bacteria</taxon>
        <taxon>Pseudomonadati</taxon>
        <taxon>Pseudomonadota</taxon>
        <taxon>Gammaproteobacteria</taxon>
        <taxon>Enterobacterales</taxon>
        <taxon>Yersiniaceae</taxon>
        <taxon>Yersinia</taxon>
    </lineage>
</organism>
<protein>
    <recommendedName>
        <fullName evidence="1">Carboxy-S-adenosyl-L-methionine synthase</fullName>
        <shortName evidence="1">Cx-SAM synthase</shortName>
        <ecNumber evidence="1">2.1.3.-</ecNumber>
    </recommendedName>
</protein>
<keyword id="KW-0949">S-adenosyl-L-methionine</keyword>
<keyword id="KW-0808">Transferase</keyword>
<name>CMOA_YERPN</name>
<comment type="function">
    <text evidence="1">Catalyzes the conversion of S-adenosyl-L-methionine (SAM) to carboxy-S-adenosyl-L-methionine (Cx-SAM).</text>
</comment>
<comment type="catalytic activity">
    <reaction evidence="1">
        <text>prephenate + S-adenosyl-L-methionine = carboxy-S-adenosyl-L-methionine + 3-phenylpyruvate + H2O</text>
        <dbReference type="Rhea" id="RHEA:51692"/>
        <dbReference type="ChEBI" id="CHEBI:15377"/>
        <dbReference type="ChEBI" id="CHEBI:18005"/>
        <dbReference type="ChEBI" id="CHEBI:29934"/>
        <dbReference type="ChEBI" id="CHEBI:59789"/>
        <dbReference type="ChEBI" id="CHEBI:134278"/>
    </reaction>
</comment>
<comment type="subunit">
    <text evidence="1">Homodimer.</text>
</comment>
<comment type="similarity">
    <text evidence="1">Belongs to the class I-like SAM-binding methyltransferase superfamily. Cx-SAM synthase family.</text>
</comment>
<dbReference type="EC" id="2.1.3.-" evidence="1"/>
<dbReference type="EMBL" id="CP000305">
    <property type="protein sequence ID" value="ABG17857.1"/>
    <property type="molecule type" value="Genomic_DNA"/>
</dbReference>
<dbReference type="EMBL" id="ACNQ01000009">
    <property type="protein sequence ID" value="EEO76963.1"/>
    <property type="molecule type" value="Genomic_DNA"/>
</dbReference>
<dbReference type="RefSeq" id="WP_002211207.1">
    <property type="nucleotide sequence ID" value="NZ_ACNQ01000009.1"/>
</dbReference>
<dbReference type="SMR" id="Q1CJH3"/>
<dbReference type="GeneID" id="57976611"/>
<dbReference type="KEGG" id="ypn:YPN_1527"/>
<dbReference type="HOGENOM" id="CLU_078475_0_0_6"/>
<dbReference type="Proteomes" id="UP000008936">
    <property type="component" value="Chromosome"/>
</dbReference>
<dbReference type="GO" id="GO:0016743">
    <property type="term" value="F:carboxyl- or carbamoyltransferase activity"/>
    <property type="evidence" value="ECO:0007669"/>
    <property type="project" value="UniProtKB-UniRule"/>
</dbReference>
<dbReference type="GO" id="GO:1904047">
    <property type="term" value="F:S-adenosyl-L-methionine binding"/>
    <property type="evidence" value="ECO:0007669"/>
    <property type="project" value="UniProtKB-UniRule"/>
</dbReference>
<dbReference type="GO" id="GO:0002098">
    <property type="term" value="P:tRNA wobble uridine modification"/>
    <property type="evidence" value="ECO:0007669"/>
    <property type="project" value="InterPro"/>
</dbReference>
<dbReference type="CDD" id="cd02440">
    <property type="entry name" value="AdoMet_MTases"/>
    <property type="match status" value="1"/>
</dbReference>
<dbReference type="Gene3D" id="3.40.50.150">
    <property type="entry name" value="Vaccinia Virus protein VP39"/>
    <property type="match status" value="1"/>
</dbReference>
<dbReference type="HAMAP" id="MF_01589">
    <property type="entry name" value="Cx_SAM_synthase"/>
    <property type="match status" value="1"/>
</dbReference>
<dbReference type="InterPro" id="IPR005271">
    <property type="entry name" value="CmoA"/>
</dbReference>
<dbReference type="InterPro" id="IPR041698">
    <property type="entry name" value="Methyltransf_25"/>
</dbReference>
<dbReference type="InterPro" id="IPR029063">
    <property type="entry name" value="SAM-dependent_MTases_sf"/>
</dbReference>
<dbReference type="NCBIfam" id="TIGR00740">
    <property type="entry name" value="carboxy-S-adenosyl-L-methionine synthase CmoA"/>
    <property type="match status" value="1"/>
</dbReference>
<dbReference type="NCBIfam" id="NF011995">
    <property type="entry name" value="PRK15451.1"/>
    <property type="match status" value="1"/>
</dbReference>
<dbReference type="PANTHER" id="PTHR43861:SF2">
    <property type="entry name" value="CARBOXY-S-ADENOSYL-L-METHIONINE SYNTHASE"/>
    <property type="match status" value="1"/>
</dbReference>
<dbReference type="PANTHER" id="PTHR43861">
    <property type="entry name" value="TRANS-ACONITATE 2-METHYLTRANSFERASE-RELATED"/>
    <property type="match status" value="1"/>
</dbReference>
<dbReference type="Pfam" id="PF13649">
    <property type="entry name" value="Methyltransf_25"/>
    <property type="match status" value="1"/>
</dbReference>
<dbReference type="PIRSF" id="PIRSF006325">
    <property type="entry name" value="MeTrfase_bac"/>
    <property type="match status" value="1"/>
</dbReference>
<dbReference type="SUPFAM" id="SSF53335">
    <property type="entry name" value="S-adenosyl-L-methionine-dependent methyltransferases"/>
    <property type="match status" value="1"/>
</dbReference>